<reference key="1">
    <citation type="submission" date="1999-10" db="EMBL/GenBank/DDBJ databases">
        <title>Urotrichus talpoides cytochrome b, complete cds.</title>
        <authorList>
            <person name="Kusakabe S."/>
            <person name="Onuma M."/>
        </authorList>
    </citation>
    <scope>NUCLEOTIDE SEQUENCE [GENOMIC DNA]</scope>
</reference>
<dbReference type="EMBL" id="AB033611">
    <property type="protein sequence ID" value="BAA85752.1"/>
    <property type="molecule type" value="Genomic_DNA"/>
</dbReference>
<dbReference type="SMR" id="Q9TDT5"/>
<dbReference type="GO" id="GO:0005743">
    <property type="term" value="C:mitochondrial inner membrane"/>
    <property type="evidence" value="ECO:0007669"/>
    <property type="project" value="UniProtKB-SubCell"/>
</dbReference>
<dbReference type="GO" id="GO:0045275">
    <property type="term" value="C:respiratory chain complex III"/>
    <property type="evidence" value="ECO:0007669"/>
    <property type="project" value="InterPro"/>
</dbReference>
<dbReference type="GO" id="GO:0046872">
    <property type="term" value="F:metal ion binding"/>
    <property type="evidence" value="ECO:0007669"/>
    <property type="project" value="UniProtKB-KW"/>
</dbReference>
<dbReference type="GO" id="GO:0008121">
    <property type="term" value="F:ubiquinol-cytochrome-c reductase activity"/>
    <property type="evidence" value="ECO:0007669"/>
    <property type="project" value="InterPro"/>
</dbReference>
<dbReference type="GO" id="GO:0006122">
    <property type="term" value="P:mitochondrial electron transport, ubiquinol to cytochrome c"/>
    <property type="evidence" value="ECO:0007669"/>
    <property type="project" value="TreeGrafter"/>
</dbReference>
<dbReference type="CDD" id="cd00290">
    <property type="entry name" value="cytochrome_b_C"/>
    <property type="match status" value="1"/>
</dbReference>
<dbReference type="CDD" id="cd00284">
    <property type="entry name" value="Cytochrome_b_N"/>
    <property type="match status" value="1"/>
</dbReference>
<dbReference type="FunFam" id="1.20.810.10:FF:000002">
    <property type="entry name" value="Cytochrome b"/>
    <property type="match status" value="1"/>
</dbReference>
<dbReference type="Gene3D" id="1.20.810.10">
    <property type="entry name" value="Cytochrome Bc1 Complex, Chain C"/>
    <property type="match status" value="1"/>
</dbReference>
<dbReference type="InterPro" id="IPR005798">
    <property type="entry name" value="Cyt_b/b6_C"/>
</dbReference>
<dbReference type="InterPro" id="IPR036150">
    <property type="entry name" value="Cyt_b/b6_C_sf"/>
</dbReference>
<dbReference type="InterPro" id="IPR005797">
    <property type="entry name" value="Cyt_b/b6_N"/>
</dbReference>
<dbReference type="InterPro" id="IPR027387">
    <property type="entry name" value="Cytb/b6-like_sf"/>
</dbReference>
<dbReference type="InterPro" id="IPR030689">
    <property type="entry name" value="Cytochrome_b"/>
</dbReference>
<dbReference type="InterPro" id="IPR048260">
    <property type="entry name" value="Cytochrome_b_C_euk/bac"/>
</dbReference>
<dbReference type="InterPro" id="IPR048259">
    <property type="entry name" value="Cytochrome_b_N_euk/bac"/>
</dbReference>
<dbReference type="InterPro" id="IPR016174">
    <property type="entry name" value="Di-haem_cyt_TM"/>
</dbReference>
<dbReference type="PANTHER" id="PTHR19271">
    <property type="entry name" value="CYTOCHROME B"/>
    <property type="match status" value="1"/>
</dbReference>
<dbReference type="PANTHER" id="PTHR19271:SF16">
    <property type="entry name" value="CYTOCHROME B"/>
    <property type="match status" value="1"/>
</dbReference>
<dbReference type="Pfam" id="PF00032">
    <property type="entry name" value="Cytochrom_B_C"/>
    <property type="match status" value="1"/>
</dbReference>
<dbReference type="Pfam" id="PF00033">
    <property type="entry name" value="Cytochrome_B"/>
    <property type="match status" value="1"/>
</dbReference>
<dbReference type="PIRSF" id="PIRSF038885">
    <property type="entry name" value="COB"/>
    <property type="match status" value="1"/>
</dbReference>
<dbReference type="SUPFAM" id="SSF81648">
    <property type="entry name" value="a domain/subunit of cytochrome bc1 complex (Ubiquinol-cytochrome c reductase)"/>
    <property type="match status" value="1"/>
</dbReference>
<dbReference type="SUPFAM" id="SSF81342">
    <property type="entry name" value="Transmembrane di-heme cytochromes"/>
    <property type="match status" value="1"/>
</dbReference>
<dbReference type="PROSITE" id="PS51003">
    <property type="entry name" value="CYTB_CTER"/>
    <property type="match status" value="1"/>
</dbReference>
<dbReference type="PROSITE" id="PS51002">
    <property type="entry name" value="CYTB_NTER"/>
    <property type="match status" value="1"/>
</dbReference>
<sequence>MTNLRKTHPLMKIINNSFIDLPAPSNISSWWNFGSLLGICLILQILTGLFLAMHYTSDTMTAFSSVTHICRDVNYGWLIRYLHANGASMFFICLFLHVGRGLYYGSYMFMETWNIGVILLFAVMATAFMGYVLPWGQMSFWGATVITNLLSAIPYIGTDLVEWIWGGFSVDKATLTRFFAFHFILPFVIAALAGVHLLFFHETGSNNPSGLTSDSDKIPFHPYYTIKDILGVLILILVLSSLVLFSPDLLGDPDNYIPANPLNTPPHIKPGWYFLFAYAILRSIPNKLGGVLAFVFSILVLALMPLLHTSKQRSMMFRPISQCLFWLLVADLFTLTWIGGQPVEHPFIIIGQLASILYFMLILVLMPLASLTENNLLKW</sequence>
<protein>
    <recommendedName>
        <fullName>Cytochrome b</fullName>
    </recommendedName>
    <alternativeName>
        <fullName>Complex III subunit 3</fullName>
    </alternativeName>
    <alternativeName>
        <fullName>Complex III subunit III</fullName>
    </alternativeName>
    <alternativeName>
        <fullName>Cytochrome b-c1 complex subunit 3</fullName>
    </alternativeName>
    <alternativeName>
        <fullName>Ubiquinol-cytochrome-c reductase complex cytochrome b subunit</fullName>
    </alternativeName>
</protein>
<accession>Q9TDT5</accession>
<comment type="function">
    <text evidence="2">Component of the ubiquinol-cytochrome c reductase complex (complex III or cytochrome b-c1 complex) that is part of the mitochondrial respiratory chain. The b-c1 complex mediates electron transfer from ubiquinol to cytochrome c. Contributes to the generation of a proton gradient across the mitochondrial membrane that is then used for ATP synthesis.</text>
</comment>
<comment type="cofactor">
    <cofactor evidence="2">
        <name>heme b</name>
        <dbReference type="ChEBI" id="CHEBI:60344"/>
    </cofactor>
    <text evidence="2">Binds 2 heme b groups non-covalently.</text>
</comment>
<comment type="subunit">
    <text evidence="2">The cytochrome bc1 complex contains 11 subunits: 3 respiratory subunits (MT-CYB, CYC1 and UQCRFS1), 2 core proteins (UQCRC1 and UQCRC2) and 6 low-molecular weight proteins (UQCRH/QCR6, UQCRB/QCR7, UQCRQ/QCR8, UQCR10/QCR9, UQCR11/QCR10 and a cleavage product of UQCRFS1). This cytochrome bc1 complex then forms a dimer.</text>
</comment>
<comment type="subcellular location">
    <subcellularLocation>
        <location evidence="2">Mitochondrion inner membrane</location>
        <topology evidence="2">Multi-pass membrane protein</topology>
    </subcellularLocation>
</comment>
<comment type="miscellaneous">
    <text evidence="1">Heme 1 (or BL or b562) is low-potential and absorbs at about 562 nm, and heme 2 (or BH or b566) is high-potential and absorbs at about 566 nm.</text>
</comment>
<comment type="similarity">
    <text evidence="3 4">Belongs to the cytochrome b family.</text>
</comment>
<comment type="caution">
    <text evidence="2">The full-length protein contains only eight transmembrane helices, not nine as predicted by bioinformatics tools.</text>
</comment>
<feature type="chain" id="PRO_0000061701" description="Cytochrome b">
    <location>
        <begin position="1"/>
        <end position="379"/>
    </location>
</feature>
<feature type="transmembrane region" description="Helical" evidence="2">
    <location>
        <begin position="33"/>
        <end position="53"/>
    </location>
</feature>
<feature type="transmembrane region" description="Helical" evidence="2">
    <location>
        <begin position="77"/>
        <end position="98"/>
    </location>
</feature>
<feature type="transmembrane region" description="Helical" evidence="2">
    <location>
        <begin position="113"/>
        <end position="133"/>
    </location>
</feature>
<feature type="transmembrane region" description="Helical" evidence="2">
    <location>
        <begin position="178"/>
        <end position="198"/>
    </location>
</feature>
<feature type="transmembrane region" description="Helical" evidence="2">
    <location>
        <begin position="226"/>
        <end position="246"/>
    </location>
</feature>
<feature type="transmembrane region" description="Helical" evidence="2">
    <location>
        <begin position="288"/>
        <end position="308"/>
    </location>
</feature>
<feature type="transmembrane region" description="Helical" evidence="2">
    <location>
        <begin position="320"/>
        <end position="340"/>
    </location>
</feature>
<feature type="transmembrane region" description="Helical" evidence="2">
    <location>
        <begin position="347"/>
        <end position="367"/>
    </location>
</feature>
<feature type="binding site" description="axial binding residue" evidence="2">
    <location>
        <position position="83"/>
    </location>
    <ligand>
        <name>heme b</name>
        <dbReference type="ChEBI" id="CHEBI:60344"/>
        <label>b562</label>
    </ligand>
    <ligandPart>
        <name>Fe</name>
        <dbReference type="ChEBI" id="CHEBI:18248"/>
    </ligandPart>
</feature>
<feature type="binding site" description="axial binding residue" evidence="2">
    <location>
        <position position="97"/>
    </location>
    <ligand>
        <name>heme b</name>
        <dbReference type="ChEBI" id="CHEBI:60344"/>
        <label>b566</label>
    </ligand>
    <ligandPart>
        <name>Fe</name>
        <dbReference type="ChEBI" id="CHEBI:18248"/>
    </ligandPart>
</feature>
<feature type="binding site" description="axial binding residue" evidence="2">
    <location>
        <position position="182"/>
    </location>
    <ligand>
        <name>heme b</name>
        <dbReference type="ChEBI" id="CHEBI:60344"/>
        <label>b562</label>
    </ligand>
    <ligandPart>
        <name>Fe</name>
        <dbReference type="ChEBI" id="CHEBI:18248"/>
    </ligandPart>
</feature>
<feature type="binding site" description="axial binding residue" evidence="2">
    <location>
        <position position="196"/>
    </location>
    <ligand>
        <name>heme b</name>
        <dbReference type="ChEBI" id="CHEBI:60344"/>
        <label>b566</label>
    </ligand>
    <ligandPart>
        <name>Fe</name>
        <dbReference type="ChEBI" id="CHEBI:18248"/>
    </ligandPart>
</feature>
<feature type="binding site" evidence="2">
    <location>
        <position position="201"/>
    </location>
    <ligand>
        <name>a ubiquinone</name>
        <dbReference type="ChEBI" id="CHEBI:16389"/>
    </ligand>
</feature>
<evidence type="ECO:0000250" key="1"/>
<evidence type="ECO:0000250" key="2">
    <source>
        <dbReference type="UniProtKB" id="P00157"/>
    </source>
</evidence>
<evidence type="ECO:0000255" key="3">
    <source>
        <dbReference type="PROSITE-ProRule" id="PRU00967"/>
    </source>
</evidence>
<evidence type="ECO:0000255" key="4">
    <source>
        <dbReference type="PROSITE-ProRule" id="PRU00968"/>
    </source>
</evidence>
<geneLocation type="mitochondrion"/>
<organism>
    <name type="scientific">Urotrichus talpoides</name>
    <name type="common">Japanese shrew mole</name>
    <dbReference type="NCBI Taxonomy" id="106106"/>
    <lineage>
        <taxon>Eukaryota</taxon>
        <taxon>Metazoa</taxon>
        <taxon>Chordata</taxon>
        <taxon>Craniata</taxon>
        <taxon>Vertebrata</taxon>
        <taxon>Euteleostomi</taxon>
        <taxon>Mammalia</taxon>
        <taxon>Eutheria</taxon>
        <taxon>Laurasiatheria</taxon>
        <taxon>Eulipotyphla</taxon>
        <taxon>Talpidae</taxon>
        <taxon>Urotrichus</taxon>
    </lineage>
</organism>
<gene>
    <name type="primary">MT-CYB</name>
    <name type="synonym">COB</name>
    <name type="synonym">CYTB</name>
    <name type="synonym">MTCYB</name>
</gene>
<keyword id="KW-0249">Electron transport</keyword>
<keyword id="KW-0349">Heme</keyword>
<keyword id="KW-0408">Iron</keyword>
<keyword id="KW-0472">Membrane</keyword>
<keyword id="KW-0479">Metal-binding</keyword>
<keyword id="KW-0496">Mitochondrion</keyword>
<keyword id="KW-0999">Mitochondrion inner membrane</keyword>
<keyword id="KW-0679">Respiratory chain</keyword>
<keyword id="KW-0812">Transmembrane</keyword>
<keyword id="KW-1133">Transmembrane helix</keyword>
<keyword id="KW-0813">Transport</keyword>
<keyword id="KW-0830">Ubiquinone</keyword>
<name>CYB_UROTA</name>
<proteinExistence type="inferred from homology"/>